<keyword id="KW-0192">Crown gall tumor</keyword>
<keyword id="KW-0255">Endonuclease</keyword>
<keyword id="KW-0378">Hydrolase</keyword>
<keyword id="KW-0540">Nuclease</keyword>
<keyword id="KW-0614">Plasmid</keyword>
<gene>
    <name type="primary">virD1</name>
</gene>
<geneLocation type="plasmid">
    <name>pTiA6NC</name>
</geneLocation>
<name>VIRD1_RHIRD</name>
<feature type="chain" id="PRO_0000065857" description="T-DNA border endonuclease VirD1">
    <location>
        <begin position="1"/>
        <end position="147"/>
    </location>
</feature>
<sequence>MSKHTRVTSSETAINQHRSLNVEGFKVVSARLRSAEYETFSYQARLLGLSDSMAIRVAVRRIGGFLEIDAHTREKMEAILQSIGILSSNVSMLLSAYAEDPRSDLEAVRDERIAFGEAFAALDGLLRSILSVSRRRIDGCSLLKGAL</sequence>
<protein>
    <recommendedName>
        <fullName>T-DNA border endonuclease VirD1</fullName>
        <ecNumber>3.1.-.-</ecNumber>
    </recommendedName>
</protein>
<organism>
    <name type="scientific">Rhizobium radiobacter</name>
    <name type="common">Agrobacterium tumefaciens</name>
    <name type="synonym">Agrobacterium radiobacter</name>
    <dbReference type="NCBI Taxonomy" id="358"/>
    <lineage>
        <taxon>Bacteria</taxon>
        <taxon>Pseudomonadati</taxon>
        <taxon>Pseudomonadota</taxon>
        <taxon>Alphaproteobacteria</taxon>
        <taxon>Hyphomicrobiales</taxon>
        <taxon>Rhizobiaceae</taxon>
        <taxon>Rhizobium/Agrobacterium group</taxon>
        <taxon>Agrobacterium</taxon>
        <taxon>Agrobacterium tumefaciens complex</taxon>
    </lineage>
</organism>
<reference key="1">
    <citation type="journal article" date="1986" name="Cell">
        <title>The virD operon of Agrobacterium tumefaciens encodes a site-specific endonuclease.</title>
        <authorList>
            <person name="Yanofsky M.F."/>
            <person name="Porter S.G."/>
            <person name="Young C."/>
            <person name="Albright L.M."/>
            <person name="Gordon M.P."/>
            <person name="Nester E.W."/>
        </authorList>
    </citation>
    <scope>NUCLEOTIDE SEQUENCE [GENOMIC DNA]</scope>
</reference>
<reference key="2">
    <citation type="journal article" date="1987" name="J. Bacteriol.">
        <title>Double-stranded cleavage of T-DNA and generation of single-stranded T-DNA molecules in Escherichia coli by a virD-encoded border-specific endonuclease from Agrobacterium tumefaciens.</title>
        <authorList>
            <person name="Jayaswal R.K."/>
            <person name="Veluthambi K."/>
            <person name="Gelvin S.B."/>
            <person name="Slightom J.L."/>
        </authorList>
    </citation>
    <scope>NUCLEOTIDE SEQUENCE [GENOMIC DNA]</scope>
</reference>
<proteinExistence type="predicted"/>
<comment type="function">
    <text>Tumor formation by A.tumefaciens involves the transfer and integration of a defined segment (T-DNA) of Ti plasmid DNA into the plant nuclear genome. The virD operon encodes a site-specific endonuclease that cleaves at a unique site within both 24 bp direct repeats flanking the T-DNA.</text>
</comment>
<accession>P06667</accession>
<dbReference type="EC" id="3.1.-.-"/>
<dbReference type="EMBL" id="AF242881">
    <property type="protein sequence ID" value="AAA98389.1"/>
    <property type="molecule type" value="Genomic_DNA"/>
</dbReference>
<dbReference type="EMBL" id="M17989">
    <property type="protein sequence ID" value="AAA22113.1"/>
    <property type="molecule type" value="Genomic_DNA"/>
</dbReference>
<dbReference type="PIR" id="A29826">
    <property type="entry name" value="A25063"/>
</dbReference>
<dbReference type="RefSeq" id="NP_059813.1">
    <property type="nucleotide sequence ID" value="NC_002377.1"/>
</dbReference>
<dbReference type="RefSeq" id="WP_010892501.1">
    <property type="nucleotide sequence ID" value="NZ_QSNU01000012.1"/>
</dbReference>
<dbReference type="OrthoDB" id="8373062at2"/>
<dbReference type="GO" id="GO:0004519">
    <property type="term" value="F:endonuclease activity"/>
    <property type="evidence" value="ECO:0007669"/>
    <property type="project" value="UniProtKB-KW"/>
</dbReference>
<dbReference type="InterPro" id="IPR009933">
    <property type="entry name" value="VirD1"/>
</dbReference>
<dbReference type="NCBIfam" id="NF010432">
    <property type="entry name" value="PRK13858.1"/>
    <property type="match status" value="1"/>
</dbReference>
<dbReference type="Pfam" id="PF07328">
    <property type="entry name" value="VirD1"/>
    <property type="match status" value="1"/>
</dbReference>